<organism>
    <name type="scientific">Mycobacterium tuberculosis (strain ATCC 25618 / H37Rv)</name>
    <dbReference type="NCBI Taxonomy" id="83332"/>
    <lineage>
        <taxon>Bacteria</taxon>
        <taxon>Bacillati</taxon>
        <taxon>Actinomycetota</taxon>
        <taxon>Actinomycetes</taxon>
        <taxon>Mycobacteriales</taxon>
        <taxon>Mycobacteriaceae</taxon>
        <taxon>Mycobacterium</taxon>
        <taxon>Mycobacterium tuberculosis complex</taxon>
    </lineage>
</organism>
<name>Y2742_MYCTU</name>
<dbReference type="EMBL" id="AL123456">
    <property type="status" value="NOT_ANNOTATED_CDS"/>
    <property type="molecule type" value="Genomic_DNA"/>
</dbReference>
<dbReference type="RefSeq" id="WP_003912838.1">
    <property type="nucleotide sequence ID" value="NZ_NVQJ01000020.1"/>
</dbReference>
<dbReference type="SMR" id="P0DMQ8"/>
<dbReference type="InParanoid" id="P0DMQ8"/>
<dbReference type="Proteomes" id="UP000001584">
    <property type="component" value="Chromosome"/>
</dbReference>
<dbReference type="GO" id="GO:0005886">
    <property type="term" value="C:plasma membrane"/>
    <property type="evidence" value="ECO:0007669"/>
    <property type="project" value="UniProtKB-SubCell"/>
</dbReference>
<dbReference type="InterPro" id="IPR035197">
    <property type="entry name" value="DUF5313"/>
</dbReference>
<dbReference type="Pfam" id="PF17240">
    <property type="entry name" value="DUF5313"/>
    <property type="match status" value="1"/>
</dbReference>
<sequence>MSDNAIRPRPNPWQYIRYCYGARLPDSMRDWVRNDLAGKGAAIRMMIRVAVPAVLVLAPFWLIPTSLDVHLSMTLPILIPFVYFSHALNKVWRRHMLRVHNLDPELVDEHARQRDAHIHRAYIERYGPRPDPND</sequence>
<evidence type="ECO:0000255" key="1"/>
<evidence type="ECO:0000305" key="2"/>
<proteinExistence type="evidence at protein level"/>
<gene>
    <name evidence="2" type="ordered locus">Rv2742A</name>
</gene>
<accession>P0DMQ8</accession>
<reference key="1">
    <citation type="journal article" date="1998" name="Nature">
        <title>Deciphering the biology of Mycobacterium tuberculosis from the complete genome sequence.</title>
        <authorList>
            <person name="Cole S.T."/>
            <person name="Brosch R."/>
            <person name="Parkhill J."/>
            <person name="Garnier T."/>
            <person name="Churcher C.M."/>
            <person name="Harris D.E."/>
            <person name="Gordon S.V."/>
            <person name="Eiglmeier K."/>
            <person name="Gas S."/>
            <person name="Barry C.E. III"/>
            <person name="Tekaia F."/>
            <person name="Badcock K."/>
            <person name="Basham D."/>
            <person name="Brown D."/>
            <person name="Chillingworth T."/>
            <person name="Connor R."/>
            <person name="Davies R.M."/>
            <person name="Devlin K."/>
            <person name="Feltwell T."/>
            <person name="Gentles S."/>
            <person name="Hamlin N."/>
            <person name="Holroyd S."/>
            <person name="Hornsby T."/>
            <person name="Jagels K."/>
            <person name="Krogh A."/>
            <person name="McLean J."/>
            <person name="Moule S."/>
            <person name="Murphy L.D."/>
            <person name="Oliver S."/>
            <person name="Osborne J."/>
            <person name="Quail M.A."/>
            <person name="Rajandream M.A."/>
            <person name="Rogers J."/>
            <person name="Rutter S."/>
            <person name="Seeger K."/>
            <person name="Skelton S."/>
            <person name="Squares S."/>
            <person name="Squares R."/>
            <person name="Sulston J.E."/>
            <person name="Taylor K."/>
            <person name="Whitehead S."/>
            <person name="Barrell B.G."/>
        </authorList>
    </citation>
    <scope>NUCLEOTIDE SEQUENCE [LARGE SCALE GENOMIC DNA]</scope>
    <source>
        <strain>ATCC 25618 / H37Rv</strain>
    </source>
</reference>
<reference key="2">
    <citation type="journal article" date="2011" name="Mol. Cell. Proteomics">
        <title>Proteogenomic analysis of Mycobacterium tuberculosis by high resolution mass spectrometry.</title>
        <authorList>
            <person name="Kelkar D.S."/>
            <person name="Kumar D."/>
            <person name="Kumar P."/>
            <person name="Balakrishnan L."/>
            <person name="Muthusamy B."/>
            <person name="Yadav A.K."/>
            <person name="Shrivastava P."/>
            <person name="Marimuthu A."/>
            <person name="Anand S."/>
            <person name="Sundaram H."/>
            <person name="Kingsbury R."/>
            <person name="Harsha H.C."/>
            <person name="Nair B."/>
            <person name="Prasad T.S."/>
            <person name="Chauhan D.S."/>
            <person name="Katoch K."/>
            <person name="Katoch V.M."/>
            <person name="Kumar P."/>
            <person name="Chaerkady R."/>
            <person name="Ramachandran S."/>
            <person name="Dash D."/>
            <person name="Pandey A."/>
        </authorList>
    </citation>
    <scope>IDENTIFICATION BY MASS SPECTROMETRY [LARGE SCALE ANALYSIS]</scope>
    <source>
        <strain>ATCC 25618 / H37Rv</strain>
    </source>
</reference>
<keyword id="KW-1003">Cell membrane</keyword>
<keyword id="KW-0472">Membrane</keyword>
<keyword id="KW-1185">Reference proteome</keyword>
<keyword id="KW-0812">Transmembrane</keyword>
<keyword id="KW-1133">Transmembrane helix</keyword>
<comment type="subcellular location">
    <subcellularLocation>
        <location evidence="2">Cell membrane</location>
        <topology evidence="1">Multi-pass membrane protein</topology>
    </subcellularLocation>
</comment>
<feature type="chain" id="PRO_0000431254" description="Uncharacterized protein Rv2742A">
    <location>
        <begin position="1"/>
        <end position="134"/>
    </location>
</feature>
<feature type="transmembrane region" description="Helical; Name=1" evidence="1">
    <location>
        <begin position="49"/>
        <end position="69"/>
    </location>
</feature>
<feature type="transmembrane region" description="Helical; Name=2" evidence="1">
    <location>
        <begin position="71"/>
        <end position="91"/>
    </location>
</feature>
<protein>
    <recommendedName>
        <fullName evidence="2">Uncharacterized protein Rv2742A</fullName>
    </recommendedName>
</protein>